<evidence type="ECO:0000250" key="1"/>
<evidence type="ECO:0000250" key="2">
    <source>
        <dbReference type="UniProtKB" id="Q5QD03"/>
    </source>
</evidence>
<evidence type="ECO:0000255" key="3">
    <source>
        <dbReference type="PROSITE-ProRule" id="PRU00155"/>
    </source>
</evidence>
<evidence type="ECO:0000255" key="4">
    <source>
        <dbReference type="PROSITE-ProRule" id="PRU00157"/>
    </source>
</evidence>
<evidence type="ECO:0000255" key="5">
    <source>
        <dbReference type="PROSITE-ProRule" id="PRU00190"/>
    </source>
</evidence>
<evidence type="ECO:0000255" key="6">
    <source>
        <dbReference type="PROSITE-ProRule" id="PRU00358"/>
    </source>
</evidence>
<evidence type="ECO:0000255" key="7">
    <source>
        <dbReference type="PROSITE-ProRule" id="PRU00908"/>
    </source>
</evidence>
<evidence type="ECO:0000256" key="8">
    <source>
        <dbReference type="SAM" id="MobiDB-lite"/>
    </source>
</evidence>
<evidence type="ECO:0000269" key="9">
    <source>
    </source>
</evidence>
<evidence type="ECO:0000305" key="10"/>
<comment type="function">
    <text evidence="2">Histone methyltransferase. Methylates 'Lys-9' of histone H3. H3 'Lys-9' methylation represents a specific tag for epigenetic transcriptional repression.</text>
</comment>
<comment type="catalytic activity">
    <reaction evidence="2">
        <text>L-lysyl(9)-[histone H3] + S-adenosyl-L-methionine = N(6)-methyl-L-lysyl(9)-[histone H3] + S-adenosyl-L-homocysteine + H(+)</text>
        <dbReference type="Rhea" id="RHEA:60280"/>
        <dbReference type="Rhea" id="RHEA-COMP:15542"/>
        <dbReference type="Rhea" id="RHEA-COMP:15546"/>
        <dbReference type="ChEBI" id="CHEBI:15378"/>
        <dbReference type="ChEBI" id="CHEBI:29969"/>
        <dbReference type="ChEBI" id="CHEBI:57856"/>
        <dbReference type="ChEBI" id="CHEBI:59789"/>
        <dbReference type="ChEBI" id="CHEBI:61929"/>
        <dbReference type="EC" id="2.1.1.367"/>
    </reaction>
</comment>
<comment type="subcellular location">
    <subcellularLocation>
        <location evidence="6 9">Nucleus</location>
    </subcellularLocation>
    <subcellularLocation>
        <location evidence="9">Chromosome</location>
        <location evidence="9">Centromere</location>
    </subcellularLocation>
    <text>Associates with centromeric constitutive heterochromatin.</text>
</comment>
<comment type="tissue specificity">
    <text evidence="9">Expressed in leaves stems and flowers.</text>
</comment>
<comment type="domain">
    <text>Although the SET domain contains the active site of enzymatic activity, both pre-SET and post-SET domains are required for methyltransferase activity.</text>
</comment>
<comment type="domain">
    <text evidence="1">In the pre-SET domain, Cys residues bind 3 zinc ions that are arranged in a triangular cluster; some of these Cys residues contribute to the binding of two zinc ions within the cluster.</text>
</comment>
<comment type="similarity">
    <text evidence="7">Belongs to the class V-like SAM-binding methyltransferase superfamily. Histone-lysine methyltransferase family. Suvar3-9 subfamily.</text>
</comment>
<dbReference type="EC" id="2.1.1.367" evidence="2"/>
<dbReference type="EMBL" id="AF344446">
    <property type="protein sequence ID" value="AAK28968.1"/>
    <property type="molecule type" value="mRNA"/>
</dbReference>
<dbReference type="EMBL" id="AC008017">
    <property type="protein sequence ID" value="AAD55657.1"/>
    <property type="molecule type" value="Genomic_DNA"/>
</dbReference>
<dbReference type="EMBL" id="CP002684">
    <property type="protein sequence ID" value="AEE35414.1"/>
    <property type="molecule type" value="Genomic_DNA"/>
</dbReference>
<dbReference type="EMBL" id="AY099620">
    <property type="protein sequence ID" value="AAM20471.1"/>
    <property type="molecule type" value="mRNA"/>
</dbReference>
<dbReference type="EMBL" id="BT002137">
    <property type="protein sequence ID" value="AAN72148.1"/>
    <property type="molecule type" value="mRNA"/>
</dbReference>
<dbReference type="PIR" id="F96756">
    <property type="entry name" value="F96756"/>
</dbReference>
<dbReference type="RefSeq" id="NP_565056.1">
    <property type="nucleotide sequence ID" value="NM_105968.3"/>
</dbReference>
<dbReference type="SMR" id="Q9C5P4"/>
<dbReference type="BioGRID" id="28860">
    <property type="interactions" value="10"/>
</dbReference>
<dbReference type="FunCoup" id="Q9C5P4">
    <property type="interactions" value="749"/>
</dbReference>
<dbReference type="IntAct" id="Q9C5P4">
    <property type="interactions" value="7"/>
</dbReference>
<dbReference type="STRING" id="3702.Q9C5P4"/>
<dbReference type="GlyGen" id="Q9C5P4">
    <property type="glycosylation" value="2 sites"/>
</dbReference>
<dbReference type="PaxDb" id="3702-AT1G73100.1"/>
<dbReference type="ProteomicsDB" id="226571"/>
<dbReference type="EnsemblPlants" id="AT1G73100.1">
    <property type="protein sequence ID" value="AT1G73100.1"/>
    <property type="gene ID" value="AT1G73100"/>
</dbReference>
<dbReference type="GeneID" id="843641"/>
<dbReference type="Gramene" id="AT1G73100.1">
    <property type="protein sequence ID" value="AT1G73100.1"/>
    <property type="gene ID" value="AT1G73100"/>
</dbReference>
<dbReference type="KEGG" id="ath:AT1G73100"/>
<dbReference type="Araport" id="AT1G73100"/>
<dbReference type="TAIR" id="AT1G73100">
    <property type="gene designation" value="SUVH3"/>
</dbReference>
<dbReference type="eggNOG" id="KOG1082">
    <property type="taxonomic scope" value="Eukaryota"/>
</dbReference>
<dbReference type="HOGENOM" id="CLU_004556_2_1_1"/>
<dbReference type="InParanoid" id="Q9C5P4"/>
<dbReference type="OMA" id="SISESWV"/>
<dbReference type="OrthoDB" id="5792673at2759"/>
<dbReference type="PhylomeDB" id="Q9C5P4"/>
<dbReference type="BRENDA" id="2.1.1.367">
    <property type="organism ID" value="399"/>
</dbReference>
<dbReference type="PRO" id="PR:Q9C5P4"/>
<dbReference type="Proteomes" id="UP000006548">
    <property type="component" value="Chromosome 1"/>
</dbReference>
<dbReference type="ExpressionAtlas" id="Q9C5P4">
    <property type="expression patterns" value="baseline and differential"/>
</dbReference>
<dbReference type="GO" id="GO:0005694">
    <property type="term" value="C:chromosome"/>
    <property type="evidence" value="ECO:0000314"/>
    <property type="project" value="TAIR"/>
</dbReference>
<dbReference type="GO" id="GO:0000775">
    <property type="term" value="C:chromosome, centromeric region"/>
    <property type="evidence" value="ECO:0007669"/>
    <property type="project" value="UniProtKB-SubCell"/>
</dbReference>
<dbReference type="GO" id="GO:0005634">
    <property type="term" value="C:nucleus"/>
    <property type="evidence" value="ECO:0000314"/>
    <property type="project" value="TAIR"/>
</dbReference>
<dbReference type="GO" id="GO:0010385">
    <property type="term" value="F:double-stranded methylated DNA binding"/>
    <property type="evidence" value="ECO:0000314"/>
    <property type="project" value="TAIR"/>
</dbReference>
<dbReference type="GO" id="GO:0042054">
    <property type="term" value="F:histone methyltransferase activity"/>
    <property type="evidence" value="ECO:0000250"/>
    <property type="project" value="TAIR"/>
</dbReference>
<dbReference type="GO" id="GO:0008270">
    <property type="term" value="F:zinc ion binding"/>
    <property type="evidence" value="ECO:0007669"/>
    <property type="project" value="InterPro"/>
</dbReference>
<dbReference type="GO" id="GO:0040029">
    <property type="term" value="P:epigenetic regulation of gene expression"/>
    <property type="evidence" value="ECO:0000304"/>
    <property type="project" value="TAIR"/>
</dbReference>
<dbReference type="GO" id="GO:0032259">
    <property type="term" value="P:methylation"/>
    <property type="evidence" value="ECO:0007669"/>
    <property type="project" value="UniProtKB-KW"/>
</dbReference>
<dbReference type="FunFam" id="2.30.280.10:FF:000003">
    <property type="entry name" value="Histone-lysine N-methyltransferase, H3 lysine-9 specific SUVH5"/>
    <property type="match status" value="1"/>
</dbReference>
<dbReference type="FunFam" id="2.170.270.10:FF:000051">
    <property type="entry name" value="Histone-lysine N-methyltransferase, H3 lysine-9 specific SUVH6"/>
    <property type="match status" value="1"/>
</dbReference>
<dbReference type="Gene3D" id="2.170.270.10">
    <property type="entry name" value="SET domain"/>
    <property type="match status" value="1"/>
</dbReference>
<dbReference type="Gene3D" id="2.30.280.10">
    <property type="entry name" value="SRA-YDG"/>
    <property type="match status" value="1"/>
</dbReference>
<dbReference type="InterPro" id="IPR025794">
    <property type="entry name" value="H3-K9-MeTrfase_plant"/>
</dbReference>
<dbReference type="InterPro" id="IPR051357">
    <property type="entry name" value="H3K9_HMTase_SUVAR3-9"/>
</dbReference>
<dbReference type="InterPro" id="IPR003616">
    <property type="entry name" value="Post-SET_dom"/>
</dbReference>
<dbReference type="InterPro" id="IPR007728">
    <property type="entry name" value="Pre-SET_dom"/>
</dbReference>
<dbReference type="InterPro" id="IPR015947">
    <property type="entry name" value="PUA-like_sf"/>
</dbReference>
<dbReference type="InterPro" id="IPR001214">
    <property type="entry name" value="SET_dom"/>
</dbReference>
<dbReference type="InterPro" id="IPR046341">
    <property type="entry name" value="SET_dom_sf"/>
</dbReference>
<dbReference type="InterPro" id="IPR036987">
    <property type="entry name" value="SRA-YDG_sf"/>
</dbReference>
<dbReference type="InterPro" id="IPR003105">
    <property type="entry name" value="SRA_YDG"/>
</dbReference>
<dbReference type="PANTHER" id="PTHR45660">
    <property type="entry name" value="HISTONE-LYSINE N-METHYLTRANSFERASE SETMAR"/>
    <property type="match status" value="1"/>
</dbReference>
<dbReference type="PANTHER" id="PTHR45660:SF24">
    <property type="entry name" value="HISTONE-LYSINE N-METHYLTRANSFERASE, H3 LYSINE-9 SPECIFIC SUVH3"/>
    <property type="match status" value="1"/>
</dbReference>
<dbReference type="Pfam" id="PF05033">
    <property type="entry name" value="Pre-SET"/>
    <property type="match status" value="1"/>
</dbReference>
<dbReference type="Pfam" id="PF02182">
    <property type="entry name" value="SAD_SRA"/>
    <property type="match status" value="1"/>
</dbReference>
<dbReference type="Pfam" id="PF00856">
    <property type="entry name" value="SET"/>
    <property type="match status" value="1"/>
</dbReference>
<dbReference type="SMART" id="SM00468">
    <property type="entry name" value="PreSET"/>
    <property type="match status" value="1"/>
</dbReference>
<dbReference type="SMART" id="SM00317">
    <property type="entry name" value="SET"/>
    <property type="match status" value="1"/>
</dbReference>
<dbReference type="SMART" id="SM00466">
    <property type="entry name" value="SRA"/>
    <property type="match status" value="1"/>
</dbReference>
<dbReference type="SUPFAM" id="SSF88697">
    <property type="entry name" value="PUA domain-like"/>
    <property type="match status" value="1"/>
</dbReference>
<dbReference type="SUPFAM" id="SSF82199">
    <property type="entry name" value="SET domain"/>
    <property type="match status" value="1"/>
</dbReference>
<dbReference type="PROSITE" id="PS50868">
    <property type="entry name" value="POST_SET"/>
    <property type="match status" value="1"/>
</dbReference>
<dbReference type="PROSITE" id="PS50867">
    <property type="entry name" value="PRE_SET"/>
    <property type="match status" value="1"/>
</dbReference>
<dbReference type="PROSITE" id="PS51575">
    <property type="entry name" value="SAM_MT43_SUVAR39_2"/>
    <property type="match status" value="1"/>
</dbReference>
<dbReference type="PROSITE" id="PS50280">
    <property type="entry name" value="SET"/>
    <property type="match status" value="1"/>
</dbReference>
<dbReference type="PROSITE" id="PS51015">
    <property type="entry name" value="YDG"/>
    <property type="match status" value="1"/>
</dbReference>
<sequence>MQGVPGFNTVPNPNHYDKSIVLDIKPLRSLKPVFPNGNQGPPFVGCPPFGPSSSEYSSFFPFGAQQPTHDTPDLNQTQNTPIPSFVPPLRSYRTPTKTNGPSSSSGTKRGVGRPKGTTSVKKKEKKTVANEPNLDVQVVKKFSSDFDSGISAAEREDGNAYLVSSVLMRFDAVRRRLSQVEFTKSATSKAAGTLMSNGVRTNMKKRVGTVPGIEVGDIFFSRIEMCLVGLHMQTMAGIDYIISKAGSDEESLATSIVSSGRYEGEAQDPESLIYSGQGGNADKNRQASDQKLERGNLALENSLRKGNGVRVVRGEEDAASKTGKIYIYDGLYSISESWVEKGKSGCNTFKYKLVRQPGQPPAFGFWKSVQKWKEGLTTRPGLILPDLTSGAESKPVSLVNDVDEDKGPAYFTYTSSLKYSETFKLTQPVIGCSCSGSCSPGNHNCSCIRKNDGDLPYLNGVILVSRRPVIYECGPTCPCHASCKNRVIQTGLKSRLEVFKTRNRGWGLRSWDSLRAGSFICEYAGEVKDNGNLRGNQEEDAYVFDTSRVFNSFKWNYEPELVDEDPSTEVPEEFNLPSPLLISAKKFGNVARFMNHSCSPNVFWQPVIREGNGESVIHIAFFAMRHIPPMAELTYDYGISPTSEARDESLLHGQRTCLCGSEQCRGSFG</sequence>
<protein>
    <recommendedName>
        <fullName>Histone-lysine N-methyltransferase, H3 lysine-9 specific SUVH3</fullName>
        <ecNumber evidence="2">2.1.1.367</ecNumber>
    </recommendedName>
    <alternativeName>
        <fullName>Histone H3-K9 methyltransferase 3</fullName>
        <shortName>H3-K9-HMTase 3</shortName>
    </alternativeName>
    <alternativeName>
        <fullName>Protein SET DOMAIN GROUP 19</fullName>
    </alternativeName>
    <alternativeName>
        <fullName>Suppressor of variegation 3-9 homolog protein 3</fullName>
        <shortName>Su(var)3-9 homolog protein 3</shortName>
    </alternativeName>
</protein>
<gene>
    <name type="primary">SUVH3</name>
    <name type="synonym">SDG19</name>
    <name type="synonym">SET19</name>
    <name type="ordered locus">At1g73100</name>
    <name type="ORF">F3N23.30</name>
</gene>
<name>SUVH3_ARATH</name>
<organism>
    <name type="scientific">Arabidopsis thaliana</name>
    <name type="common">Mouse-ear cress</name>
    <dbReference type="NCBI Taxonomy" id="3702"/>
    <lineage>
        <taxon>Eukaryota</taxon>
        <taxon>Viridiplantae</taxon>
        <taxon>Streptophyta</taxon>
        <taxon>Embryophyta</taxon>
        <taxon>Tracheophyta</taxon>
        <taxon>Spermatophyta</taxon>
        <taxon>Magnoliopsida</taxon>
        <taxon>eudicotyledons</taxon>
        <taxon>Gunneridae</taxon>
        <taxon>Pentapetalae</taxon>
        <taxon>rosids</taxon>
        <taxon>malvids</taxon>
        <taxon>Brassicales</taxon>
        <taxon>Brassicaceae</taxon>
        <taxon>Camelineae</taxon>
        <taxon>Arabidopsis</taxon>
    </lineage>
</organism>
<feature type="chain" id="PRO_0000186074" description="Histone-lysine N-methyltransferase, H3 lysine-9 specific SUVH3">
    <location>
        <begin position="1"/>
        <end position="669"/>
    </location>
</feature>
<feature type="domain" description="YDG" evidence="6">
    <location>
        <begin position="208"/>
        <end position="355"/>
    </location>
</feature>
<feature type="domain" description="Pre-SET" evidence="4">
    <location>
        <begin position="430"/>
        <end position="491"/>
    </location>
</feature>
<feature type="domain" description="SET" evidence="5">
    <location>
        <begin position="494"/>
        <end position="638"/>
    </location>
</feature>
<feature type="domain" description="Post-SET" evidence="3">
    <location>
        <begin position="653"/>
        <end position="669"/>
    </location>
</feature>
<feature type="DNA-binding region" description="A.T hook">
    <location>
        <begin position="108"/>
        <end position="120"/>
    </location>
</feature>
<feature type="region of interest" description="Disordered" evidence="8">
    <location>
        <begin position="56"/>
        <end position="127"/>
    </location>
</feature>
<feature type="region of interest" description="Disordered" evidence="8">
    <location>
        <begin position="270"/>
        <end position="290"/>
    </location>
</feature>
<feature type="compositionally biased region" description="Polar residues" evidence="8">
    <location>
        <begin position="65"/>
        <end position="82"/>
    </location>
</feature>
<feature type="compositionally biased region" description="Polar residues" evidence="8">
    <location>
        <begin position="93"/>
        <end position="107"/>
    </location>
</feature>
<feature type="binding site" evidence="1">
    <location>
        <position position="432"/>
    </location>
    <ligand>
        <name>Zn(2+)</name>
        <dbReference type="ChEBI" id="CHEBI:29105"/>
        <label>1</label>
    </ligand>
</feature>
<feature type="binding site" evidence="1">
    <location>
        <position position="432"/>
    </location>
    <ligand>
        <name>Zn(2+)</name>
        <dbReference type="ChEBI" id="CHEBI:29105"/>
        <label>2</label>
    </ligand>
</feature>
<feature type="binding site" evidence="1">
    <location>
        <position position="434"/>
    </location>
    <ligand>
        <name>Zn(2+)</name>
        <dbReference type="ChEBI" id="CHEBI:29105"/>
        <label>1</label>
    </ligand>
</feature>
<feature type="binding site" evidence="1">
    <location>
        <position position="438"/>
    </location>
    <ligand>
        <name>Zn(2+)</name>
        <dbReference type="ChEBI" id="CHEBI:29105"/>
        <label>1</label>
    </ligand>
</feature>
<feature type="binding site" evidence="1">
    <location>
        <position position="438"/>
    </location>
    <ligand>
        <name>Zn(2+)</name>
        <dbReference type="ChEBI" id="CHEBI:29105"/>
        <label>3</label>
    </ligand>
</feature>
<feature type="binding site" evidence="1">
    <location>
        <position position="445"/>
    </location>
    <ligand>
        <name>Zn(2+)</name>
        <dbReference type="ChEBI" id="CHEBI:29105"/>
        <label>1</label>
    </ligand>
</feature>
<feature type="binding site" evidence="1">
    <location>
        <position position="447"/>
    </location>
    <ligand>
        <name>Zn(2+)</name>
        <dbReference type="ChEBI" id="CHEBI:29105"/>
        <label>2</label>
    </ligand>
</feature>
<feature type="binding site" evidence="1">
    <location>
        <position position="473"/>
    </location>
    <ligand>
        <name>Zn(2+)</name>
        <dbReference type="ChEBI" id="CHEBI:29105"/>
        <label>2</label>
    </ligand>
</feature>
<feature type="binding site" evidence="1">
    <location>
        <position position="473"/>
    </location>
    <ligand>
        <name>Zn(2+)</name>
        <dbReference type="ChEBI" id="CHEBI:29105"/>
        <label>3</label>
    </ligand>
</feature>
<feature type="binding site" evidence="1">
    <location>
        <position position="477"/>
    </location>
    <ligand>
        <name>Zn(2+)</name>
        <dbReference type="ChEBI" id="CHEBI:29105"/>
        <label>2</label>
    </ligand>
</feature>
<feature type="binding site" evidence="1">
    <location>
        <position position="479"/>
    </location>
    <ligand>
        <name>Zn(2+)</name>
        <dbReference type="ChEBI" id="CHEBI:29105"/>
        <label>3</label>
    </ligand>
</feature>
<feature type="binding site" evidence="1">
    <location>
        <position position="483"/>
    </location>
    <ligand>
        <name>Zn(2+)</name>
        <dbReference type="ChEBI" id="CHEBI:29105"/>
        <label>3</label>
    </ligand>
</feature>
<feature type="binding site" evidence="1">
    <location>
        <begin position="504"/>
        <end position="506"/>
    </location>
    <ligand>
        <name>S-adenosyl-L-methionine</name>
        <dbReference type="ChEBI" id="CHEBI:59789"/>
    </ligand>
</feature>
<feature type="binding site" evidence="5">
    <location>
        <position position="540"/>
    </location>
    <ligand>
        <name>S-adenosyl-L-methionine</name>
        <dbReference type="ChEBI" id="CHEBI:59789"/>
    </ligand>
</feature>
<feature type="binding site" evidence="5">
    <location>
        <position position="542"/>
    </location>
    <ligand>
        <name>S-adenosyl-L-methionine</name>
        <dbReference type="ChEBI" id="CHEBI:59789"/>
    </ligand>
</feature>
<feature type="binding site" evidence="5">
    <location>
        <position position="592"/>
    </location>
    <ligand>
        <name>S-adenosyl-L-methionine</name>
        <dbReference type="ChEBI" id="CHEBI:59789"/>
    </ligand>
</feature>
<feature type="binding site" evidence="1">
    <location>
        <begin position="595"/>
        <end position="596"/>
    </location>
    <ligand>
        <name>S-adenosyl-L-methionine</name>
        <dbReference type="ChEBI" id="CHEBI:59789"/>
    </ligand>
</feature>
<feature type="binding site" evidence="1">
    <location>
        <position position="598"/>
    </location>
    <ligand>
        <name>Zn(2+)</name>
        <dbReference type="ChEBI" id="CHEBI:29105"/>
        <label>4</label>
    </ligand>
</feature>
<feature type="binding site" evidence="1">
    <location>
        <position position="657"/>
    </location>
    <ligand>
        <name>Zn(2+)</name>
        <dbReference type="ChEBI" id="CHEBI:29105"/>
        <label>4</label>
    </ligand>
</feature>
<feature type="binding site" evidence="1">
    <location>
        <position position="659"/>
    </location>
    <ligand>
        <name>Zn(2+)</name>
        <dbReference type="ChEBI" id="CHEBI:29105"/>
        <label>4</label>
    </ligand>
</feature>
<feature type="binding site" evidence="1">
    <location>
        <position position="664"/>
    </location>
    <ligand>
        <name>Zn(2+)</name>
        <dbReference type="ChEBI" id="CHEBI:29105"/>
        <label>4</label>
    </ligand>
</feature>
<feature type="sequence conflict" description="In Ref. 1; AAK28968." evidence="10" ref="1">
    <original>S</original>
    <variation>P</variation>
    <location>
        <position position="416"/>
    </location>
</feature>
<proteinExistence type="evidence at transcript level"/>
<keyword id="KW-0137">Centromere</keyword>
<keyword id="KW-0156">Chromatin regulator</keyword>
<keyword id="KW-0158">Chromosome</keyword>
<keyword id="KW-0238">DNA-binding</keyword>
<keyword id="KW-0479">Metal-binding</keyword>
<keyword id="KW-0489">Methyltransferase</keyword>
<keyword id="KW-0539">Nucleus</keyword>
<keyword id="KW-1185">Reference proteome</keyword>
<keyword id="KW-0949">S-adenosyl-L-methionine</keyword>
<keyword id="KW-0808">Transferase</keyword>
<keyword id="KW-0862">Zinc</keyword>
<accession>Q9C5P4</accession>
<accession>Q9SSL7</accession>
<reference key="1">
    <citation type="journal article" date="2001" name="Nucleic Acids Res.">
        <title>The Arabidopsis thaliana genome contains at least 29 active genes encoding SET domain proteins that can be assigned to four evolutionarily conserved classes.</title>
        <authorList>
            <person name="Baumbusch L.O."/>
            <person name="Thorstensen T."/>
            <person name="Krauss V."/>
            <person name="Fischer A."/>
            <person name="Naumann K."/>
            <person name="Assalkhou R."/>
            <person name="Schulz I."/>
            <person name="Reuter G."/>
            <person name="Aalen R.B."/>
        </authorList>
    </citation>
    <scope>NUCLEOTIDE SEQUENCE [MRNA]</scope>
    <scope>SUBCELLULAR LOCATION</scope>
    <scope>NOMENCLATURE</scope>
    <scope>TISSUE SPECIFICITY</scope>
</reference>
<reference key="2">
    <citation type="journal article" date="2000" name="Nature">
        <title>Sequence and analysis of chromosome 1 of the plant Arabidopsis thaliana.</title>
        <authorList>
            <person name="Theologis A."/>
            <person name="Ecker J.R."/>
            <person name="Palm C.J."/>
            <person name="Federspiel N.A."/>
            <person name="Kaul S."/>
            <person name="White O."/>
            <person name="Alonso J."/>
            <person name="Altafi H."/>
            <person name="Araujo R."/>
            <person name="Bowman C.L."/>
            <person name="Brooks S.Y."/>
            <person name="Buehler E."/>
            <person name="Chan A."/>
            <person name="Chao Q."/>
            <person name="Chen H."/>
            <person name="Cheuk R.F."/>
            <person name="Chin C.W."/>
            <person name="Chung M.K."/>
            <person name="Conn L."/>
            <person name="Conway A.B."/>
            <person name="Conway A.R."/>
            <person name="Creasy T.H."/>
            <person name="Dewar K."/>
            <person name="Dunn P."/>
            <person name="Etgu P."/>
            <person name="Feldblyum T.V."/>
            <person name="Feng J.-D."/>
            <person name="Fong B."/>
            <person name="Fujii C.Y."/>
            <person name="Gill J.E."/>
            <person name="Goldsmith A.D."/>
            <person name="Haas B."/>
            <person name="Hansen N.F."/>
            <person name="Hughes B."/>
            <person name="Huizar L."/>
            <person name="Hunter J.L."/>
            <person name="Jenkins J."/>
            <person name="Johnson-Hopson C."/>
            <person name="Khan S."/>
            <person name="Khaykin E."/>
            <person name="Kim C.J."/>
            <person name="Koo H.L."/>
            <person name="Kremenetskaia I."/>
            <person name="Kurtz D.B."/>
            <person name="Kwan A."/>
            <person name="Lam B."/>
            <person name="Langin-Hooper S."/>
            <person name="Lee A."/>
            <person name="Lee J.M."/>
            <person name="Lenz C.A."/>
            <person name="Li J.H."/>
            <person name="Li Y.-P."/>
            <person name="Lin X."/>
            <person name="Liu S.X."/>
            <person name="Liu Z.A."/>
            <person name="Luros J.S."/>
            <person name="Maiti R."/>
            <person name="Marziali A."/>
            <person name="Militscher J."/>
            <person name="Miranda M."/>
            <person name="Nguyen M."/>
            <person name="Nierman W.C."/>
            <person name="Osborne B.I."/>
            <person name="Pai G."/>
            <person name="Peterson J."/>
            <person name="Pham P.K."/>
            <person name="Rizzo M."/>
            <person name="Rooney T."/>
            <person name="Rowley D."/>
            <person name="Sakano H."/>
            <person name="Salzberg S.L."/>
            <person name="Schwartz J.R."/>
            <person name="Shinn P."/>
            <person name="Southwick A.M."/>
            <person name="Sun H."/>
            <person name="Tallon L.J."/>
            <person name="Tambunga G."/>
            <person name="Toriumi M.J."/>
            <person name="Town C.D."/>
            <person name="Utterback T."/>
            <person name="Van Aken S."/>
            <person name="Vaysberg M."/>
            <person name="Vysotskaia V.S."/>
            <person name="Walker M."/>
            <person name="Wu D."/>
            <person name="Yu G."/>
            <person name="Fraser C.M."/>
            <person name="Venter J.C."/>
            <person name="Davis R.W."/>
        </authorList>
    </citation>
    <scope>NUCLEOTIDE SEQUENCE [LARGE SCALE GENOMIC DNA]</scope>
    <source>
        <strain>cv. Columbia</strain>
    </source>
</reference>
<reference key="3">
    <citation type="journal article" date="2017" name="Plant J.">
        <title>Araport11: a complete reannotation of the Arabidopsis thaliana reference genome.</title>
        <authorList>
            <person name="Cheng C.Y."/>
            <person name="Krishnakumar V."/>
            <person name="Chan A.P."/>
            <person name="Thibaud-Nissen F."/>
            <person name="Schobel S."/>
            <person name="Town C.D."/>
        </authorList>
    </citation>
    <scope>GENOME REANNOTATION</scope>
    <source>
        <strain>cv. Columbia</strain>
    </source>
</reference>
<reference key="4">
    <citation type="journal article" date="2003" name="Science">
        <title>Empirical analysis of transcriptional activity in the Arabidopsis genome.</title>
        <authorList>
            <person name="Yamada K."/>
            <person name="Lim J."/>
            <person name="Dale J.M."/>
            <person name="Chen H."/>
            <person name="Shinn P."/>
            <person name="Palm C.J."/>
            <person name="Southwick A.M."/>
            <person name="Wu H.C."/>
            <person name="Kim C.J."/>
            <person name="Nguyen M."/>
            <person name="Pham P.K."/>
            <person name="Cheuk R.F."/>
            <person name="Karlin-Newmann G."/>
            <person name="Liu S.X."/>
            <person name="Lam B."/>
            <person name="Sakano H."/>
            <person name="Wu T."/>
            <person name="Yu G."/>
            <person name="Miranda M."/>
            <person name="Quach H.L."/>
            <person name="Tripp M."/>
            <person name="Chang C.H."/>
            <person name="Lee J.M."/>
            <person name="Toriumi M.J."/>
            <person name="Chan M.M."/>
            <person name="Tang C.C."/>
            <person name="Onodera C.S."/>
            <person name="Deng J.M."/>
            <person name="Akiyama K."/>
            <person name="Ansari Y."/>
            <person name="Arakawa T."/>
            <person name="Banh J."/>
            <person name="Banno F."/>
            <person name="Bowser L."/>
            <person name="Brooks S.Y."/>
            <person name="Carninci P."/>
            <person name="Chao Q."/>
            <person name="Choy N."/>
            <person name="Enju A."/>
            <person name="Goldsmith A.D."/>
            <person name="Gurjal M."/>
            <person name="Hansen N.F."/>
            <person name="Hayashizaki Y."/>
            <person name="Johnson-Hopson C."/>
            <person name="Hsuan V.W."/>
            <person name="Iida K."/>
            <person name="Karnes M."/>
            <person name="Khan S."/>
            <person name="Koesema E."/>
            <person name="Ishida J."/>
            <person name="Jiang P.X."/>
            <person name="Jones T."/>
            <person name="Kawai J."/>
            <person name="Kamiya A."/>
            <person name="Meyers C."/>
            <person name="Nakajima M."/>
            <person name="Narusaka M."/>
            <person name="Seki M."/>
            <person name="Sakurai T."/>
            <person name="Satou M."/>
            <person name="Tamse R."/>
            <person name="Vaysberg M."/>
            <person name="Wallender E.K."/>
            <person name="Wong C."/>
            <person name="Yamamura Y."/>
            <person name="Yuan S."/>
            <person name="Shinozaki K."/>
            <person name="Davis R.W."/>
            <person name="Theologis A."/>
            <person name="Ecker J.R."/>
        </authorList>
    </citation>
    <scope>NUCLEOTIDE SEQUENCE [LARGE SCALE MRNA]</scope>
    <source>
        <strain>cv. Columbia</strain>
    </source>
</reference>
<reference key="5">
    <citation type="journal article" date="2006" name="J. Plant Physiol.">
        <title>Heterochromatin proteins and the control of heterochromatic gene silencing in Arabidopsis.</title>
        <authorList>
            <person name="Fischer A."/>
            <person name="Hofmann I."/>
            <person name="Naumann K."/>
            <person name="Reuter G."/>
        </authorList>
    </citation>
    <scope>GENE FAMILY</scope>
</reference>